<organism>
    <name type="scientific">Streptococcus pneumoniae (strain ATCC 700669 / Spain 23F-1)</name>
    <dbReference type="NCBI Taxonomy" id="561276"/>
    <lineage>
        <taxon>Bacteria</taxon>
        <taxon>Bacillati</taxon>
        <taxon>Bacillota</taxon>
        <taxon>Bacilli</taxon>
        <taxon>Lactobacillales</taxon>
        <taxon>Streptococcaceae</taxon>
        <taxon>Streptococcus</taxon>
    </lineage>
</organism>
<dbReference type="EMBL" id="FM211187">
    <property type="protein sequence ID" value="CAR68845.1"/>
    <property type="molecule type" value="Genomic_DNA"/>
</dbReference>
<dbReference type="RefSeq" id="WP_000981526.1">
    <property type="nucleotide sequence ID" value="NC_011900.1"/>
</dbReference>
<dbReference type="SMR" id="B8ZPU7"/>
<dbReference type="KEGG" id="sne:SPN23F10240"/>
<dbReference type="HOGENOM" id="CLU_140930_1_1_9"/>
<dbReference type="GO" id="GO:0043590">
    <property type="term" value="C:bacterial nucleoid"/>
    <property type="evidence" value="ECO:0007669"/>
    <property type="project" value="UniProtKB-UniRule"/>
</dbReference>
<dbReference type="GO" id="GO:0005829">
    <property type="term" value="C:cytosol"/>
    <property type="evidence" value="ECO:0007669"/>
    <property type="project" value="TreeGrafter"/>
</dbReference>
<dbReference type="GO" id="GO:0003677">
    <property type="term" value="F:DNA binding"/>
    <property type="evidence" value="ECO:0007669"/>
    <property type="project" value="UniProtKB-UniRule"/>
</dbReference>
<dbReference type="FunFam" id="3.30.1310.10:FF:000005">
    <property type="entry name" value="Nucleoid-associated protein SPAR113_1167"/>
    <property type="match status" value="1"/>
</dbReference>
<dbReference type="Gene3D" id="3.30.1310.10">
    <property type="entry name" value="Nucleoid-associated protein YbaB-like domain"/>
    <property type="match status" value="1"/>
</dbReference>
<dbReference type="HAMAP" id="MF_00274">
    <property type="entry name" value="DNA_YbaB_EbfC"/>
    <property type="match status" value="1"/>
</dbReference>
<dbReference type="InterPro" id="IPR036894">
    <property type="entry name" value="YbaB-like_sf"/>
</dbReference>
<dbReference type="InterPro" id="IPR004401">
    <property type="entry name" value="YbaB/EbfC"/>
</dbReference>
<dbReference type="NCBIfam" id="TIGR00103">
    <property type="entry name" value="DNA_YbaB_EbfC"/>
    <property type="match status" value="1"/>
</dbReference>
<dbReference type="PANTHER" id="PTHR33449">
    <property type="entry name" value="NUCLEOID-ASSOCIATED PROTEIN YBAB"/>
    <property type="match status" value="1"/>
</dbReference>
<dbReference type="PANTHER" id="PTHR33449:SF1">
    <property type="entry name" value="NUCLEOID-ASSOCIATED PROTEIN YBAB"/>
    <property type="match status" value="1"/>
</dbReference>
<dbReference type="Pfam" id="PF02575">
    <property type="entry name" value="YbaB_DNA_bd"/>
    <property type="match status" value="1"/>
</dbReference>
<dbReference type="PIRSF" id="PIRSF004555">
    <property type="entry name" value="UCP004555"/>
    <property type="match status" value="1"/>
</dbReference>
<dbReference type="SUPFAM" id="SSF82607">
    <property type="entry name" value="YbaB-like"/>
    <property type="match status" value="1"/>
</dbReference>
<evidence type="ECO:0000255" key="1">
    <source>
        <dbReference type="HAMAP-Rule" id="MF_00274"/>
    </source>
</evidence>
<sequence>MMNMQNMMRQAQKLQKQMEQSQAELAAMQFVGKSAQDLVQATLTGDKKVVSIDFNPAVVDPEDLETLSDMTVQAINSALEQIDETTKKKLGAFAGKLPF</sequence>
<accession>B8ZPU7</accession>
<proteinExistence type="inferred from homology"/>
<comment type="function">
    <text evidence="1">Binds to DNA and alters its conformation. May be involved in regulation of gene expression, nucleoid organization and DNA protection.</text>
</comment>
<comment type="subunit">
    <text evidence="1">Homodimer.</text>
</comment>
<comment type="subcellular location">
    <subcellularLocation>
        <location evidence="1">Cytoplasm</location>
        <location evidence="1">Nucleoid</location>
    </subcellularLocation>
</comment>
<comment type="similarity">
    <text evidence="1">Belongs to the YbaB/EbfC family.</text>
</comment>
<gene>
    <name type="ordered locus">SPN23F10240</name>
</gene>
<feature type="chain" id="PRO_1000197679" description="Nucleoid-associated protein SPN23F10240">
    <location>
        <begin position="1"/>
        <end position="99"/>
    </location>
</feature>
<name>Y1024_STRPJ</name>
<protein>
    <recommendedName>
        <fullName evidence="1">Nucleoid-associated protein SPN23F10240</fullName>
    </recommendedName>
</protein>
<reference key="1">
    <citation type="journal article" date="2009" name="J. Bacteriol.">
        <title>Role of conjugative elements in the evolution of the multidrug-resistant pandemic clone Streptococcus pneumoniae Spain23F ST81.</title>
        <authorList>
            <person name="Croucher N.J."/>
            <person name="Walker D."/>
            <person name="Romero P."/>
            <person name="Lennard N."/>
            <person name="Paterson G.K."/>
            <person name="Bason N.C."/>
            <person name="Mitchell A.M."/>
            <person name="Quail M.A."/>
            <person name="Andrew P.W."/>
            <person name="Parkhill J."/>
            <person name="Bentley S.D."/>
            <person name="Mitchell T.J."/>
        </authorList>
    </citation>
    <scope>NUCLEOTIDE SEQUENCE [LARGE SCALE GENOMIC DNA]</scope>
    <source>
        <strain>ATCC 700669 / Spain 23F-1</strain>
    </source>
</reference>
<keyword id="KW-0963">Cytoplasm</keyword>
<keyword id="KW-0238">DNA-binding</keyword>